<sequence length="304" mass="34893">MPLEAVVYPQDPFGYLSNCKDFMFHDLYSQEEFVAQDTKNNIDKLGHEQSFVEQGKEDDHQWRDYHQYPLLIPSLGEELGLTAIDVESHPPPQHRRKRRRTRNCKNKEEIENQRMTHIAVERNRRKQMNEYLAVLRSLMPSSYAQRGDQASIVGGAINYVKELEHILQSMEPKRTRTHDPKGDKTSTSSLVGPFTDFFSFPQYSTKSSSDVPESSSSPAEIEVTVAESHANIKIMTKKKPRQLLKLITSLQSLRLTLLHLNVTTLHNSILYSISVRVEEGSQLNTVDDIATALNQTIRRIQEET</sequence>
<organism>
    <name type="scientific">Arabidopsis thaliana</name>
    <name type="common">Mouse-ear cress</name>
    <dbReference type="NCBI Taxonomy" id="3702"/>
    <lineage>
        <taxon>Eukaryota</taxon>
        <taxon>Viridiplantae</taxon>
        <taxon>Streptophyta</taxon>
        <taxon>Embryophyta</taxon>
        <taxon>Tracheophyta</taxon>
        <taxon>Spermatophyta</taxon>
        <taxon>Magnoliopsida</taxon>
        <taxon>eudicotyledons</taxon>
        <taxon>Gunneridae</taxon>
        <taxon>Pentapetalae</taxon>
        <taxon>rosids</taxon>
        <taxon>malvids</taxon>
        <taxon>Brassicales</taxon>
        <taxon>Brassicaceae</taxon>
        <taxon>Camelineae</taxon>
        <taxon>Arabidopsis</taxon>
    </lineage>
</organism>
<comment type="subunit">
    <text evidence="4">Homodimer.</text>
</comment>
<comment type="interaction">
    <interactant intactId="EBI-15192173">
        <id>Q9SK91</id>
    </interactant>
    <interactant intactId="EBI-4475455">
        <id>Q9FG01</id>
        <label>ATO</label>
    </interactant>
    <organismsDiffer>false</organismsDiffer>
    <experiments>3</experiments>
</comment>
<comment type="interaction">
    <interactant intactId="EBI-15192173">
        <id>Q9SK91</id>
    </interactant>
    <interactant intactId="EBI-530486">
        <id>P46639</id>
        <label>KNAT1</label>
    </interactant>
    <organismsDiffer>false</organismsDiffer>
    <experiments>3</experiments>
</comment>
<comment type="subcellular location">
    <subcellularLocation>
        <location evidence="1">Nucleus</location>
    </subcellularLocation>
</comment>
<comment type="tissue specificity">
    <text evidence="3">Expressed constitutively in roots, leaves, stems, and flowers.</text>
</comment>
<comment type="sequence caution" evidence="4">
    <conflict type="erroneous gene model prediction">
        <sequence resource="EMBL-CDS" id="AAF18528"/>
    </conflict>
</comment>
<comment type="sequence caution" evidence="4">
    <conflict type="frameshift">
        <sequence resource="EMBL-CDS" id="AAM65775"/>
    </conflict>
</comment>
<gene>
    <name type="primary">BHLH94</name>
    <name type="synonym">EN16</name>
    <name type="ordered locus">At1g22490</name>
    <name type="ORF">F12K8.16</name>
</gene>
<evidence type="ECO:0000255" key="1">
    <source>
        <dbReference type="PROSITE-ProRule" id="PRU00981"/>
    </source>
</evidence>
<evidence type="ECO:0000256" key="2">
    <source>
        <dbReference type="SAM" id="MobiDB-lite"/>
    </source>
</evidence>
<evidence type="ECO:0000269" key="3">
    <source>
    </source>
</evidence>
<evidence type="ECO:0000305" key="4"/>
<dbReference type="EMBL" id="AC006551">
    <property type="protein sequence ID" value="AAF18528.1"/>
    <property type="status" value="ALT_SEQ"/>
    <property type="molecule type" value="Genomic_DNA"/>
</dbReference>
<dbReference type="EMBL" id="CP002684">
    <property type="protein sequence ID" value="AEE30247.1"/>
    <property type="molecule type" value="Genomic_DNA"/>
</dbReference>
<dbReference type="EMBL" id="AY088234">
    <property type="protein sequence ID" value="AAM65775.1"/>
    <property type="status" value="ALT_FRAME"/>
    <property type="molecule type" value="mRNA"/>
</dbReference>
<dbReference type="EMBL" id="AF488622">
    <property type="status" value="NOT_ANNOTATED_CDS"/>
    <property type="molecule type" value="mRNA"/>
</dbReference>
<dbReference type="PIR" id="B86358">
    <property type="entry name" value="B86358"/>
</dbReference>
<dbReference type="RefSeq" id="NP_564171.1">
    <property type="nucleotide sequence ID" value="NM_102098.3"/>
</dbReference>
<dbReference type="SMR" id="Q9SK91"/>
<dbReference type="BioGRID" id="24094">
    <property type="interactions" value="33"/>
</dbReference>
<dbReference type="FunCoup" id="Q9SK91">
    <property type="interactions" value="111"/>
</dbReference>
<dbReference type="IntAct" id="Q9SK91">
    <property type="interactions" value="31"/>
</dbReference>
<dbReference type="STRING" id="3702.Q9SK91"/>
<dbReference type="iPTMnet" id="Q9SK91"/>
<dbReference type="PaxDb" id="3702-AT1G22490.1"/>
<dbReference type="ProteomicsDB" id="240836"/>
<dbReference type="EnsemblPlants" id="AT1G22490.1">
    <property type="protein sequence ID" value="AT1G22490.1"/>
    <property type="gene ID" value="AT1G22490"/>
</dbReference>
<dbReference type="GeneID" id="838855"/>
<dbReference type="Gramene" id="AT1G22490.1">
    <property type="protein sequence ID" value="AT1G22490.1"/>
    <property type="gene ID" value="AT1G22490"/>
</dbReference>
<dbReference type="KEGG" id="ath:AT1G22490"/>
<dbReference type="Araport" id="AT1G22490"/>
<dbReference type="TAIR" id="AT1G22490">
    <property type="gene designation" value="BHLH094"/>
</dbReference>
<dbReference type="eggNOG" id="ENOG502QSWD">
    <property type="taxonomic scope" value="Eukaryota"/>
</dbReference>
<dbReference type="HOGENOM" id="CLU_044652_1_0_1"/>
<dbReference type="InParanoid" id="Q9SK91"/>
<dbReference type="OMA" id="AIDMESH"/>
<dbReference type="PhylomeDB" id="Q9SK91"/>
<dbReference type="PRO" id="PR:Q9SK91"/>
<dbReference type="Proteomes" id="UP000006548">
    <property type="component" value="Chromosome 1"/>
</dbReference>
<dbReference type="ExpressionAtlas" id="Q9SK91">
    <property type="expression patterns" value="baseline and differential"/>
</dbReference>
<dbReference type="GO" id="GO:0005634">
    <property type="term" value="C:nucleus"/>
    <property type="evidence" value="ECO:0007669"/>
    <property type="project" value="UniProtKB-SubCell"/>
</dbReference>
<dbReference type="GO" id="GO:0003677">
    <property type="term" value="F:DNA binding"/>
    <property type="evidence" value="ECO:0007669"/>
    <property type="project" value="UniProtKB-KW"/>
</dbReference>
<dbReference type="GO" id="GO:0003700">
    <property type="term" value="F:DNA-binding transcription factor activity"/>
    <property type="evidence" value="ECO:0000250"/>
    <property type="project" value="TAIR"/>
</dbReference>
<dbReference type="GO" id="GO:0046983">
    <property type="term" value="F:protein dimerization activity"/>
    <property type="evidence" value="ECO:0007669"/>
    <property type="project" value="InterPro"/>
</dbReference>
<dbReference type="GO" id="GO:0006355">
    <property type="term" value="P:regulation of DNA-templated transcription"/>
    <property type="evidence" value="ECO:0000304"/>
    <property type="project" value="TAIR"/>
</dbReference>
<dbReference type="CDD" id="cd11448">
    <property type="entry name" value="bHLH_AtFAMA_like"/>
    <property type="match status" value="1"/>
</dbReference>
<dbReference type="FunFam" id="4.10.280.10:FF:000050">
    <property type="entry name" value="Basic helix-loop-helix transcription factor"/>
    <property type="match status" value="1"/>
</dbReference>
<dbReference type="Gene3D" id="4.10.280.10">
    <property type="entry name" value="Helix-loop-helix DNA-binding domain"/>
    <property type="match status" value="1"/>
</dbReference>
<dbReference type="InterPro" id="IPR054502">
    <property type="entry name" value="bHLH-TF_ACT-like_plant"/>
</dbReference>
<dbReference type="InterPro" id="IPR011598">
    <property type="entry name" value="bHLH_dom"/>
</dbReference>
<dbReference type="InterPro" id="IPR036638">
    <property type="entry name" value="HLH_DNA-bd_sf"/>
</dbReference>
<dbReference type="PANTHER" id="PTHR11969">
    <property type="entry name" value="MAX DIMERIZATION, MAD"/>
    <property type="match status" value="1"/>
</dbReference>
<dbReference type="PANTHER" id="PTHR11969:SF69">
    <property type="entry name" value="TRANSCRIPTION FACTOR BHLH94"/>
    <property type="match status" value="1"/>
</dbReference>
<dbReference type="Pfam" id="PF22754">
    <property type="entry name" value="bHLH-TF_ACT-like_plant"/>
    <property type="match status" value="1"/>
</dbReference>
<dbReference type="Pfam" id="PF00010">
    <property type="entry name" value="HLH"/>
    <property type="match status" value="1"/>
</dbReference>
<dbReference type="SMART" id="SM00353">
    <property type="entry name" value="HLH"/>
    <property type="match status" value="1"/>
</dbReference>
<dbReference type="SUPFAM" id="SSF47459">
    <property type="entry name" value="HLH, helix-loop-helix DNA-binding domain"/>
    <property type="match status" value="1"/>
</dbReference>
<dbReference type="PROSITE" id="PS50888">
    <property type="entry name" value="BHLH"/>
    <property type="match status" value="1"/>
</dbReference>
<name>BH094_ARATH</name>
<proteinExistence type="evidence at protein level"/>
<reference key="1">
    <citation type="journal article" date="2000" name="Nature">
        <title>Sequence and analysis of chromosome 1 of the plant Arabidopsis thaliana.</title>
        <authorList>
            <person name="Theologis A."/>
            <person name="Ecker J.R."/>
            <person name="Palm C.J."/>
            <person name="Federspiel N.A."/>
            <person name="Kaul S."/>
            <person name="White O."/>
            <person name="Alonso J."/>
            <person name="Altafi H."/>
            <person name="Araujo R."/>
            <person name="Bowman C.L."/>
            <person name="Brooks S.Y."/>
            <person name="Buehler E."/>
            <person name="Chan A."/>
            <person name="Chao Q."/>
            <person name="Chen H."/>
            <person name="Cheuk R.F."/>
            <person name="Chin C.W."/>
            <person name="Chung M.K."/>
            <person name="Conn L."/>
            <person name="Conway A.B."/>
            <person name="Conway A.R."/>
            <person name="Creasy T.H."/>
            <person name="Dewar K."/>
            <person name="Dunn P."/>
            <person name="Etgu P."/>
            <person name="Feldblyum T.V."/>
            <person name="Feng J.-D."/>
            <person name="Fong B."/>
            <person name="Fujii C.Y."/>
            <person name="Gill J.E."/>
            <person name="Goldsmith A.D."/>
            <person name="Haas B."/>
            <person name="Hansen N.F."/>
            <person name="Hughes B."/>
            <person name="Huizar L."/>
            <person name="Hunter J.L."/>
            <person name="Jenkins J."/>
            <person name="Johnson-Hopson C."/>
            <person name="Khan S."/>
            <person name="Khaykin E."/>
            <person name="Kim C.J."/>
            <person name="Koo H.L."/>
            <person name="Kremenetskaia I."/>
            <person name="Kurtz D.B."/>
            <person name="Kwan A."/>
            <person name="Lam B."/>
            <person name="Langin-Hooper S."/>
            <person name="Lee A."/>
            <person name="Lee J.M."/>
            <person name="Lenz C.A."/>
            <person name="Li J.H."/>
            <person name="Li Y.-P."/>
            <person name="Lin X."/>
            <person name="Liu S.X."/>
            <person name="Liu Z.A."/>
            <person name="Luros J.S."/>
            <person name="Maiti R."/>
            <person name="Marziali A."/>
            <person name="Militscher J."/>
            <person name="Miranda M."/>
            <person name="Nguyen M."/>
            <person name="Nierman W.C."/>
            <person name="Osborne B.I."/>
            <person name="Pai G."/>
            <person name="Peterson J."/>
            <person name="Pham P.K."/>
            <person name="Rizzo M."/>
            <person name="Rooney T."/>
            <person name="Rowley D."/>
            <person name="Sakano H."/>
            <person name="Salzberg S.L."/>
            <person name="Schwartz J.R."/>
            <person name="Shinn P."/>
            <person name="Southwick A.M."/>
            <person name="Sun H."/>
            <person name="Tallon L.J."/>
            <person name="Tambunga G."/>
            <person name="Toriumi M.J."/>
            <person name="Town C.D."/>
            <person name="Utterback T."/>
            <person name="Van Aken S."/>
            <person name="Vaysberg M."/>
            <person name="Vysotskaia V.S."/>
            <person name="Walker M."/>
            <person name="Wu D."/>
            <person name="Yu G."/>
            <person name="Fraser C.M."/>
            <person name="Venter J.C."/>
            <person name="Davis R.W."/>
        </authorList>
    </citation>
    <scope>NUCLEOTIDE SEQUENCE [LARGE SCALE GENOMIC DNA]</scope>
    <source>
        <strain>cv. Columbia</strain>
    </source>
</reference>
<reference key="2">
    <citation type="journal article" date="2017" name="Plant J.">
        <title>Araport11: a complete reannotation of the Arabidopsis thaliana reference genome.</title>
        <authorList>
            <person name="Cheng C.Y."/>
            <person name="Krishnakumar V."/>
            <person name="Chan A.P."/>
            <person name="Thibaud-Nissen F."/>
            <person name="Schobel S."/>
            <person name="Town C.D."/>
        </authorList>
    </citation>
    <scope>GENOME REANNOTATION</scope>
    <source>
        <strain>cv. Columbia</strain>
    </source>
</reference>
<reference key="3">
    <citation type="submission" date="2002-03" db="EMBL/GenBank/DDBJ databases">
        <title>Full-length cDNA from Arabidopsis thaliana.</title>
        <authorList>
            <person name="Brover V.V."/>
            <person name="Troukhan M.E."/>
            <person name="Alexandrov N.A."/>
            <person name="Lu Y.-P."/>
            <person name="Flavell R.B."/>
            <person name="Feldmann K.A."/>
        </authorList>
    </citation>
    <scope>NUCLEOTIDE SEQUENCE [LARGE SCALE MRNA]</scope>
</reference>
<reference key="4">
    <citation type="journal article" date="2003" name="Mol. Biol. Evol.">
        <title>The basic helix-loop-helix transcription factor family in plants: a genome-wide study of protein structure and functional diversity.</title>
        <authorList>
            <person name="Heim M.A."/>
            <person name="Jakoby M."/>
            <person name="Werber M."/>
            <person name="Martin C."/>
            <person name="Weisshaar B."/>
            <person name="Bailey P.C."/>
        </authorList>
    </citation>
    <scope>NUCLEOTIDE SEQUENCE [MRNA] OF 10-304</scope>
    <scope>TISSUE SPECIFICITY</scope>
    <scope>GENE FAMILY</scope>
    <scope>NOMENCLATURE</scope>
    <source>
        <strain>cv. Columbia</strain>
    </source>
</reference>
<reference key="5">
    <citation type="journal article" date="2003" name="Plant Cell">
        <title>The Arabidopsis basic/helix-loop-helix transcription factor family.</title>
        <authorList>
            <person name="Toledo-Ortiz G."/>
            <person name="Huq E."/>
            <person name="Quail P.H."/>
        </authorList>
    </citation>
    <scope>GENE FAMILY</scope>
</reference>
<reference key="6">
    <citation type="journal article" date="2003" name="Plant Cell">
        <title>Update on the basic helix-loop-helix transcription factor gene family in Arabidopsis thaliana.</title>
        <authorList>
            <person name="Bailey P.C."/>
            <person name="Martin C."/>
            <person name="Toledo-Ortiz G."/>
            <person name="Quail P.H."/>
            <person name="Huq E."/>
            <person name="Heim M.A."/>
            <person name="Jakoby M."/>
            <person name="Werber M."/>
            <person name="Weisshaar B."/>
        </authorList>
    </citation>
    <scope>GENE FAMILY</scope>
    <scope>NOMENCLATURE</scope>
</reference>
<protein>
    <recommendedName>
        <fullName>Transcription factor bHLH94</fullName>
    </recommendedName>
    <alternativeName>
        <fullName>Basic helix-loop-helix protein 94</fullName>
        <shortName>AtbHLH94</shortName>
        <shortName>bHLH 94</shortName>
    </alternativeName>
    <alternativeName>
        <fullName>Transcription factor EN 16</fullName>
    </alternativeName>
    <alternativeName>
        <fullName>bHLH transcription factor bHLH094</fullName>
    </alternativeName>
</protein>
<keyword id="KW-0238">DNA-binding</keyword>
<keyword id="KW-0539">Nucleus</keyword>
<keyword id="KW-1185">Reference proteome</keyword>
<keyword id="KW-0804">Transcription</keyword>
<keyword id="KW-0805">Transcription regulation</keyword>
<feature type="chain" id="PRO_0000358785" description="Transcription factor bHLH94">
    <location>
        <begin position="1"/>
        <end position="304"/>
    </location>
</feature>
<feature type="domain" description="bHLH" evidence="1">
    <location>
        <begin position="112"/>
        <end position="163"/>
    </location>
</feature>
<feature type="region of interest" description="Disordered" evidence="2">
    <location>
        <begin position="86"/>
        <end position="107"/>
    </location>
</feature>
<feature type="compositionally biased region" description="Basic residues" evidence="2">
    <location>
        <begin position="92"/>
        <end position="104"/>
    </location>
</feature>
<feature type="sequence conflict" description="In Ref. 3; AAM65775." evidence="4" ref="3">
    <original>S</original>
    <variation>I</variation>
    <location>
        <position position="188"/>
    </location>
</feature>
<accession>Q9SK91</accession>
<accession>Q8L9T3</accession>